<evidence type="ECO:0000255" key="1">
    <source>
        <dbReference type="HAMAP-Rule" id="MF_00226"/>
    </source>
</evidence>
<comment type="similarity">
    <text evidence="1">Belongs to the CinA family.</text>
</comment>
<proteinExistence type="inferred from homology"/>
<name>CINAL_SYNP6</name>
<reference key="1">
    <citation type="journal article" date="2007" name="Photosyn. Res.">
        <title>Complete nucleotide sequence of the freshwater unicellular cyanobacterium Synechococcus elongatus PCC 6301 chromosome: gene content and organization.</title>
        <authorList>
            <person name="Sugita C."/>
            <person name="Ogata K."/>
            <person name="Shikata M."/>
            <person name="Jikuya H."/>
            <person name="Takano J."/>
            <person name="Furumichi M."/>
            <person name="Kanehisa M."/>
            <person name="Omata T."/>
            <person name="Sugiura M."/>
            <person name="Sugita M."/>
        </authorList>
    </citation>
    <scope>NUCLEOTIDE SEQUENCE [LARGE SCALE GENOMIC DNA]</scope>
    <source>
        <strain>ATCC 27144 / PCC 6301 / SAUG 1402/1</strain>
    </source>
</reference>
<feature type="chain" id="PRO_0000156783" description="CinA-like protein">
    <location>
        <begin position="1"/>
        <end position="421"/>
    </location>
</feature>
<organism>
    <name type="scientific">Synechococcus sp. (strain ATCC 27144 / PCC 6301 / SAUG 1402/1)</name>
    <name type="common">Anacystis nidulans</name>
    <dbReference type="NCBI Taxonomy" id="269084"/>
    <lineage>
        <taxon>Bacteria</taxon>
        <taxon>Bacillati</taxon>
        <taxon>Cyanobacteriota</taxon>
        <taxon>Cyanophyceae</taxon>
        <taxon>Synechococcales</taxon>
        <taxon>Synechococcaceae</taxon>
        <taxon>Synechococcus</taxon>
    </lineage>
</organism>
<gene>
    <name evidence="1" type="primary">cinA</name>
    <name type="ordered locus">syc1233_d</name>
</gene>
<protein>
    <recommendedName>
        <fullName evidence="1">CinA-like protein</fullName>
    </recommendedName>
</protein>
<sequence length="421" mass="45057">MSDPRYCAEIISVGTELLLGNILNSNAQFLAEELAQLGIPHYFQTVVGDNRDRLQSAVKIAAERSGLLIFTGGLGPTPDDLTTETLAACFETHLAERPEVITDIEAKFTRRGRVLTDNNRKQALLPVGAELLPNPSGTAPGMIRSPRSGLTLMTFPGVPAEMRRMWTETAVPWLHQNDWCRSILVSRLLRFWGISESALAEKVAPFFDLQNPTVAPYANNGEVKLRITAAAASEAEGVALIAPIEQELRAIAGRDCYGADNDSLASVVGALLHDRGQTLAVAESCTGGGLGQLITTIPGSSQWFWGGVIAYDNRVKQSLLNVSAETLAEAGAVSAVVAEQMAIGIQQRLGTTWGVSITGIAGPDGGTETKPVGLVYIGIAGPTGCFGVERRWGAERGRDWVRRLSAGEALDQLRRSLLNLT</sequence>
<accession>Q5N2P7</accession>
<dbReference type="EMBL" id="AP008231">
    <property type="protein sequence ID" value="BAD79423.1"/>
    <property type="molecule type" value="Genomic_DNA"/>
</dbReference>
<dbReference type="RefSeq" id="WP_011243545.1">
    <property type="nucleotide sequence ID" value="NC_006576.1"/>
</dbReference>
<dbReference type="SMR" id="Q5N2P7"/>
<dbReference type="KEGG" id="syc:syc1233_d"/>
<dbReference type="eggNOG" id="COG1058">
    <property type="taxonomic scope" value="Bacteria"/>
</dbReference>
<dbReference type="eggNOG" id="COG1546">
    <property type="taxonomic scope" value="Bacteria"/>
</dbReference>
<dbReference type="Proteomes" id="UP000001175">
    <property type="component" value="Chromosome"/>
</dbReference>
<dbReference type="CDD" id="cd00885">
    <property type="entry name" value="cinA"/>
    <property type="match status" value="1"/>
</dbReference>
<dbReference type="Gene3D" id="3.30.70.2860">
    <property type="match status" value="1"/>
</dbReference>
<dbReference type="Gene3D" id="3.90.950.20">
    <property type="entry name" value="CinA-like"/>
    <property type="match status" value="1"/>
</dbReference>
<dbReference type="Gene3D" id="3.40.980.10">
    <property type="entry name" value="MoaB/Mog-like domain"/>
    <property type="match status" value="1"/>
</dbReference>
<dbReference type="HAMAP" id="MF_00226_B">
    <property type="entry name" value="CinA_B"/>
    <property type="match status" value="1"/>
</dbReference>
<dbReference type="InterPro" id="IPR050101">
    <property type="entry name" value="CinA"/>
</dbReference>
<dbReference type="InterPro" id="IPR036653">
    <property type="entry name" value="CinA-like_C"/>
</dbReference>
<dbReference type="InterPro" id="IPR008136">
    <property type="entry name" value="CinA_C"/>
</dbReference>
<dbReference type="InterPro" id="IPR041424">
    <property type="entry name" value="CinA_KH"/>
</dbReference>
<dbReference type="InterPro" id="IPR008135">
    <property type="entry name" value="Competence-induced_CinA"/>
</dbReference>
<dbReference type="InterPro" id="IPR036425">
    <property type="entry name" value="MoaB/Mog-like_dom_sf"/>
</dbReference>
<dbReference type="InterPro" id="IPR001453">
    <property type="entry name" value="MoaB/Mog_dom"/>
</dbReference>
<dbReference type="NCBIfam" id="TIGR00200">
    <property type="entry name" value="cinA_nterm"/>
    <property type="match status" value="1"/>
</dbReference>
<dbReference type="NCBIfam" id="TIGR00199">
    <property type="entry name" value="PncC_domain"/>
    <property type="match status" value="1"/>
</dbReference>
<dbReference type="NCBIfam" id="NF001813">
    <property type="entry name" value="PRK00549.1"/>
    <property type="match status" value="1"/>
</dbReference>
<dbReference type="PANTHER" id="PTHR13939">
    <property type="entry name" value="NICOTINAMIDE-NUCLEOTIDE AMIDOHYDROLASE PNCC"/>
    <property type="match status" value="1"/>
</dbReference>
<dbReference type="PANTHER" id="PTHR13939:SF0">
    <property type="entry name" value="NMN AMIDOHYDROLASE-LIKE PROTEIN YFAY"/>
    <property type="match status" value="1"/>
</dbReference>
<dbReference type="Pfam" id="PF02464">
    <property type="entry name" value="CinA"/>
    <property type="match status" value="1"/>
</dbReference>
<dbReference type="Pfam" id="PF18146">
    <property type="entry name" value="CinA_KH"/>
    <property type="match status" value="1"/>
</dbReference>
<dbReference type="Pfam" id="PF00994">
    <property type="entry name" value="MoCF_biosynth"/>
    <property type="match status" value="1"/>
</dbReference>
<dbReference type="PIRSF" id="PIRSF006728">
    <property type="entry name" value="CinA"/>
    <property type="match status" value="1"/>
</dbReference>
<dbReference type="SMART" id="SM00852">
    <property type="entry name" value="MoCF_biosynth"/>
    <property type="match status" value="1"/>
</dbReference>
<dbReference type="SUPFAM" id="SSF142433">
    <property type="entry name" value="CinA-like"/>
    <property type="match status" value="1"/>
</dbReference>
<dbReference type="SUPFAM" id="SSF53218">
    <property type="entry name" value="Molybdenum cofactor biosynthesis proteins"/>
    <property type="match status" value="1"/>
</dbReference>